<accession>P51571</accession>
<accession>A8K378</accession>
<accession>Q53XY1</accession>
<evidence type="ECO:0000250" key="1"/>
<evidence type="ECO:0000255" key="2"/>
<evidence type="ECO:0000269" key="3">
    <source>
    </source>
</evidence>
<evidence type="ECO:0000269" key="4">
    <source>
    </source>
</evidence>
<evidence type="ECO:0000269" key="5">
    <source>
    </source>
</evidence>
<evidence type="ECO:0000305" key="6"/>
<evidence type="ECO:0007744" key="7">
    <source>
        <dbReference type="PDB" id="8B6L"/>
    </source>
</evidence>
<keyword id="KW-0002">3D-structure</keyword>
<keyword id="KW-0900">Congenital disorder of glycosylation</keyword>
<keyword id="KW-1015">Disulfide bond</keyword>
<keyword id="KW-0256">Endoplasmic reticulum</keyword>
<keyword id="KW-1017">Isopeptide bond</keyword>
<keyword id="KW-0472">Membrane</keyword>
<keyword id="KW-1267">Proteomics identification</keyword>
<keyword id="KW-1185">Reference proteome</keyword>
<keyword id="KW-0732">Signal</keyword>
<keyword id="KW-0812">Transmembrane</keyword>
<keyword id="KW-1133">Transmembrane helix</keyword>
<keyword id="KW-0832">Ubl conjugation</keyword>
<feature type="signal peptide" evidence="2">
    <location>
        <begin position="1"/>
        <end position="23"/>
    </location>
</feature>
<feature type="chain" id="PRO_0000033292" description="Translocon-associated protein subunit delta">
    <location>
        <begin position="24"/>
        <end position="173"/>
    </location>
</feature>
<feature type="topological domain" description="Lumenal" evidence="2">
    <location>
        <begin position="24"/>
        <end position="144"/>
    </location>
</feature>
<feature type="transmembrane region" description="Helical" evidence="2">
    <location>
        <begin position="145"/>
        <end position="165"/>
    </location>
</feature>
<feature type="topological domain" description="Cytoplasmic" evidence="2">
    <location>
        <begin position="166"/>
        <end position="173"/>
    </location>
</feature>
<feature type="disulfide bond" evidence="1">
    <location>
        <begin position="26"/>
        <end position="57"/>
    </location>
</feature>
<feature type="cross-link" description="Glycyl lysine isopeptide (Lys-Gly) (interchain with G-Cter in ubiquitin)">
    <location>
        <position position="73"/>
    </location>
</feature>
<feature type="sequence variant" id="VAR_064161" description="In dbSNP:rs782018895." evidence="3">
    <original>G</original>
    <variation>R</variation>
    <location>
        <position position="144"/>
    </location>
</feature>
<feature type="sequence conflict" description="In Ref. 2." evidence="6" ref="2">
    <original>E</original>
    <variation>K</variation>
    <location>
        <position position="109"/>
    </location>
</feature>
<proteinExistence type="evidence at protein level"/>
<comment type="function">
    <text>TRAP proteins are part of a complex whose function is to bind calcium to the ER membrane and thereby regulate the retention of ER resident proteins.</text>
</comment>
<comment type="subunit">
    <text evidence="5">Heterotetramer of TRAP-alpha, TRAP-beta, TRAP-delta and TRAP-gamma.</text>
</comment>
<comment type="subcellular location">
    <subcellularLocation>
        <location>Endoplasmic reticulum membrane</location>
        <topology>Single-pass type I membrane protein</topology>
    </subcellularLocation>
</comment>
<comment type="disease" evidence="4">
    <disease id="DI-04259">
        <name>Congenital disorder of glycosylation 1Y</name>
        <acronym>CDG1Y</acronym>
        <description>A form of congenital disorder of glycosylation, a multisystem disorder caused by a defect in glycoprotein biosynthesis and characterized by under-glycosylated serum glycoproteins. Congenital disorders of glycosylation result in a wide variety of clinical features, such as defects in the nervous system development, psychomotor retardation, dysmorphic features, hypotonia, coagulation disorders, and immunodeficiency. The broad spectrum of features reflects the critical role of N-glycoproteins during embryonic development, differentiation, and maintenance of cell functions.</description>
        <dbReference type="MIM" id="300934"/>
    </disease>
    <text>The disease is caused by variants affecting the gene represented in this entry.</text>
</comment>
<comment type="similarity">
    <text evidence="6">Belongs to the TRAP-delta family.</text>
</comment>
<organism>
    <name type="scientific">Homo sapiens</name>
    <name type="common">Human</name>
    <dbReference type="NCBI Taxonomy" id="9606"/>
    <lineage>
        <taxon>Eukaryota</taxon>
        <taxon>Metazoa</taxon>
        <taxon>Chordata</taxon>
        <taxon>Craniata</taxon>
        <taxon>Vertebrata</taxon>
        <taxon>Euteleostomi</taxon>
        <taxon>Mammalia</taxon>
        <taxon>Eutheria</taxon>
        <taxon>Euarchontoglires</taxon>
        <taxon>Primates</taxon>
        <taxon>Haplorrhini</taxon>
        <taxon>Catarrhini</taxon>
        <taxon>Hominidae</taxon>
        <taxon>Homo</taxon>
    </lineage>
</organism>
<protein>
    <recommendedName>
        <fullName>Translocon-associated protein subunit delta</fullName>
        <shortName>TRAP-delta</shortName>
    </recommendedName>
    <alternativeName>
        <fullName>Signal sequence receptor subunit delta</fullName>
        <shortName>SSR-delta</shortName>
    </alternativeName>
</protein>
<reference key="1">
    <citation type="journal article" date="1995" name="Biochem. J.">
        <title>Translocon-associated protein TRAP delta and a novel TRAP-like protein are coordinately expressed with pro-opiomelanocortin in Xenopus intermediate pituitary.</title>
        <authorList>
            <person name="Holthuis J.C.M."/>
            <person name="van Riel M.C.H.M."/>
            <person name="Martens G.J.M."/>
        </authorList>
    </citation>
    <scope>NUCLEOTIDE SEQUENCE [MRNA]</scope>
    <source>
        <tissue>Brain</tissue>
    </source>
</reference>
<reference key="2">
    <citation type="journal article" date="1997" name="Genomics">
        <title>Genomic organization of two novel genes on human Xq28: compact head to head arrangement of IDH gamma and TRAP delta is conserved in rat and mouse.</title>
        <authorList>
            <person name="Brenner V."/>
            <person name="Nyakatura G."/>
            <person name="Rosenthal A."/>
            <person name="Platzer M."/>
        </authorList>
    </citation>
    <scope>NUCLEOTIDE SEQUENCE [GENOMIC DNA / MRNA]</scope>
    <source>
        <tissue>Liver</tissue>
        <tissue>Placenta</tissue>
        <tissue>Spleen</tissue>
    </source>
</reference>
<reference key="3">
    <citation type="submission" date="2003-05" db="EMBL/GenBank/DDBJ databases">
        <title>Cloning of human full-length CDSs in BD Creator(TM) system donor vector.</title>
        <authorList>
            <person name="Kalnine N."/>
            <person name="Chen X."/>
            <person name="Rolfs A."/>
            <person name="Halleck A."/>
            <person name="Hines L."/>
            <person name="Eisenstein S."/>
            <person name="Koundinya M."/>
            <person name="Raphael J."/>
            <person name="Moreira D."/>
            <person name="Kelley T."/>
            <person name="LaBaer J."/>
            <person name="Lin Y."/>
            <person name="Phelan M."/>
            <person name="Farmer A."/>
        </authorList>
    </citation>
    <scope>NUCLEOTIDE SEQUENCE [LARGE SCALE MRNA]</scope>
</reference>
<reference key="4">
    <citation type="journal article" date="2004" name="Nat. Genet.">
        <title>Complete sequencing and characterization of 21,243 full-length human cDNAs.</title>
        <authorList>
            <person name="Ota T."/>
            <person name="Suzuki Y."/>
            <person name="Nishikawa T."/>
            <person name="Otsuki T."/>
            <person name="Sugiyama T."/>
            <person name="Irie R."/>
            <person name="Wakamatsu A."/>
            <person name="Hayashi K."/>
            <person name="Sato H."/>
            <person name="Nagai K."/>
            <person name="Kimura K."/>
            <person name="Makita H."/>
            <person name="Sekine M."/>
            <person name="Obayashi M."/>
            <person name="Nishi T."/>
            <person name="Shibahara T."/>
            <person name="Tanaka T."/>
            <person name="Ishii S."/>
            <person name="Yamamoto J."/>
            <person name="Saito K."/>
            <person name="Kawai Y."/>
            <person name="Isono Y."/>
            <person name="Nakamura Y."/>
            <person name="Nagahari K."/>
            <person name="Murakami K."/>
            <person name="Yasuda T."/>
            <person name="Iwayanagi T."/>
            <person name="Wagatsuma M."/>
            <person name="Shiratori A."/>
            <person name="Sudo H."/>
            <person name="Hosoiri T."/>
            <person name="Kaku Y."/>
            <person name="Kodaira H."/>
            <person name="Kondo H."/>
            <person name="Sugawara M."/>
            <person name="Takahashi M."/>
            <person name="Kanda K."/>
            <person name="Yokoi T."/>
            <person name="Furuya T."/>
            <person name="Kikkawa E."/>
            <person name="Omura Y."/>
            <person name="Abe K."/>
            <person name="Kamihara K."/>
            <person name="Katsuta N."/>
            <person name="Sato K."/>
            <person name="Tanikawa M."/>
            <person name="Yamazaki M."/>
            <person name="Ninomiya K."/>
            <person name="Ishibashi T."/>
            <person name="Yamashita H."/>
            <person name="Murakawa K."/>
            <person name="Fujimori K."/>
            <person name="Tanai H."/>
            <person name="Kimata M."/>
            <person name="Watanabe M."/>
            <person name="Hiraoka S."/>
            <person name="Chiba Y."/>
            <person name="Ishida S."/>
            <person name="Ono Y."/>
            <person name="Takiguchi S."/>
            <person name="Watanabe S."/>
            <person name="Yosida M."/>
            <person name="Hotuta T."/>
            <person name="Kusano J."/>
            <person name="Kanehori K."/>
            <person name="Takahashi-Fujii A."/>
            <person name="Hara H."/>
            <person name="Tanase T.-O."/>
            <person name="Nomura Y."/>
            <person name="Togiya S."/>
            <person name="Komai F."/>
            <person name="Hara R."/>
            <person name="Takeuchi K."/>
            <person name="Arita M."/>
            <person name="Imose N."/>
            <person name="Musashino K."/>
            <person name="Yuuki H."/>
            <person name="Oshima A."/>
            <person name="Sasaki N."/>
            <person name="Aotsuka S."/>
            <person name="Yoshikawa Y."/>
            <person name="Matsunawa H."/>
            <person name="Ichihara T."/>
            <person name="Shiohata N."/>
            <person name="Sano S."/>
            <person name="Moriya S."/>
            <person name="Momiyama H."/>
            <person name="Satoh N."/>
            <person name="Takami S."/>
            <person name="Terashima Y."/>
            <person name="Suzuki O."/>
            <person name="Nakagawa S."/>
            <person name="Senoh A."/>
            <person name="Mizoguchi H."/>
            <person name="Goto Y."/>
            <person name="Shimizu F."/>
            <person name="Wakebe H."/>
            <person name="Hishigaki H."/>
            <person name="Watanabe T."/>
            <person name="Sugiyama A."/>
            <person name="Takemoto M."/>
            <person name="Kawakami B."/>
            <person name="Yamazaki M."/>
            <person name="Watanabe K."/>
            <person name="Kumagai A."/>
            <person name="Itakura S."/>
            <person name="Fukuzumi Y."/>
            <person name="Fujimori Y."/>
            <person name="Komiyama M."/>
            <person name="Tashiro H."/>
            <person name="Tanigami A."/>
            <person name="Fujiwara T."/>
            <person name="Ono T."/>
            <person name="Yamada K."/>
            <person name="Fujii Y."/>
            <person name="Ozaki K."/>
            <person name="Hirao M."/>
            <person name="Ohmori Y."/>
            <person name="Kawabata A."/>
            <person name="Hikiji T."/>
            <person name="Kobatake N."/>
            <person name="Inagaki H."/>
            <person name="Ikema Y."/>
            <person name="Okamoto S."/>
            <person name="Okitani R."/>
            <person name="Kawakami T."/>
            <person name="Noguchi S."/>
            <person name="Itoh T."/>
            <person name="Shigeta K."/>
            <person name="Senba T."/>
            <person name="Matsumura K."/>
            <person name="Nakajima Y."/>
            <person name="Mizuno T."/>
            <person name="Morinaga M."/>
            <person name="Sasaki M."/>
            <person name="Togashi T."/>
            <person name="Oyama M."/>
            <person name="Hata H."/>
            <person name="Watanabe M."/>
            <person name="Komatsu T."/>
            <person name="Mizushima-Sugano J."/>
            <person name="Satoh T."/>
            <person name="Shirai Y."/>
            <person name="Takahashi Y."/>
            <person name="Nakagawa K."/>
            <person name="Okumura K."/>
            <person name="Nagase T."/>
            <person name="Nomura N."/>
            <person name="Kikuchi H."/>
            <person name="Masuho Y."/>
            <person name="Yamashita R."/>
            <person name="Nakai K."/>
            <person name="Yada T."/>
            <person name="Nakamura Y."/>
            <person name="Ohara O."/>
            <person name="Isogai T."/>
            <person name="Sugano S."/>
        </authorList>
    </citation>
    <scope>NUCLEOTIDE SEQUENCE [LARGE SCALE MRNA]</scope>
    <source>
        <tissue>Brain</tissue>
    </source>
</reference>
<reference key="5">
    <citation type="journal article" date="2005" name="Nature">
        <title>The DNA sequence of the human X chromosome.</title>
        <authorList>
            <person name="Ross M.T."/>
            <person name="Grafham D.V."/>
            <person name="Coffey A.J."/>
            <person name="Scherer S."/>
            <person name="McLay K."/>
            <person name="Muzny D."/>
            <person name="Platzer M."/>
            <person name="Howell G.R."/>
            <person name="Burrows C."/>
            <person name="Bird C.P."/>
            <person name="Frankish A."/>
            <person name="Lovell F.L."/>
            <person name="Howe K.L."/>
            <person name="Ashurst J.L."/>
            <person name="Fulton R.S."/>
            <person name="Sudbrak R."/>
            <person name="Wen G."/>
            <person name="Jones M.C."/>
            <person name="Hurles M.E."/>
            <person name="Andrews T.D."/>
            <person name="Scott C.E."/>
            <person name="Searle S."/>
            <person name="Ramser J."/>
            <person name="Whittaker A."/>
            <person name="Deadman R."/>
            <person name="Carter N.P."/>
            <person name="Hunt S.E."/>
            <person name="Chen R."/>
            <person name="Cree A."/>
            <person name="Gunaratne P."/>
            <person name="Havlak P."/>
            <person name="Hodgson A."/>
            <person name="Metzker M.L."/>
            <person name="Richards S."/>
            <person name="Scott G."/>
            <person name="Steffen D."/>
            <person name="Sodergren E."/>
            <person name="Wheeler D.A."/>
            <person name="Worley K.C."/>
            <person name="Ainscough R."/>
            <person name="Ambrose K.D."/>
            <person name="Ansari-Lari M.A."/>
            <person name="Aradhya S."/>
            <person name="Ashwell R.I."/>
            <person name="Babbage A.K."/>
            <person name="Bagguley C.L."/>
            <person name="Ballabio A."/>
            <person name="Banerjee R."/>
            <person name="Barker G.E."/>
            <person name="Barlow K.F."/>
            <person name="Barrett I.P."/>
            <person name="Bates K.N."/>
            <person name="Beare D.M."/>
            <person name="Beasley H."/>
            <person name="Beasley O."/>
            <person name="Beck A."/>
            <person name="Bethel G."/>
            <person name="Blechschmidt K."/>
            <person name="Brady N."/>
            <person name="Bray-Allen S."/>
            <person name="Bridgeman A.M."/>
            <person name="Brown A.J."/>
            <person name="Brown M.J."/>
            <person name="Bonnin D."/>
            <person name="Bruford E.A."/>
            <person name="Buhay C."/>
            <person name="Burch P."/>
            <person name="Burford D."/>
            <person name="Burgess J."/>
            <person name="Burrill W."/>
            <person name="Burton J."/>
            <person name="Bye J.M."/>
            <person name="Carder C."/>
            <person name="Carrel L."/>
            <person name="Chako J."/>
            <person name="Chapman J.C."/>
            <person name="Chavez D."/>
            <person name="Chen E."/>
            <person name="Chen G."/>
            <person name="Chen Y."/>
            <person name="Chen Z."/>
            <person name="Chinault C."/>
            <person name="Ciccodicola A."/>
            <person name="Clark S.Y."/>
            <person name="Clarke G."/>
            <person name="Clee C.M."/>
            <person name="Clegg S."/>
            <person name="Clerc-Blankenburg K."/>
            <person name="Clifford K."/>
            <person name="Cobley V."/>
            <person name="Cole C.G."/>
            <person name="Conquer J.S."/>
            <person name="Corby N."/>
            <person name="Connor R.E."/>
            <person name="David R."/>
            <person name="Davies J."/>
            <person name="Davis C."/>
            <person name="Davis J."/>
            <person name="Delgado O."/>
            <person name="Deshazo D."/>
            <person name="Dhami P."/>
            <person name="Ding Y."/>
            <person name="Dinh H."/>
            <person name="Dodsworth S."/>
            <person name="Draper H."/>
            <person name="Dugan-Rocha S."/>
            <person name="Dunham A."/>
            <person name="Dunn M."/>
            <person name="Durbin K.J."/>
            <person name="Dutta I."/>
            <person name="Eades T."/>
            <person name="Ellwood M."/>
            <person name="Emery-Cohen A."/>
            <person name="Errington H."/>
            <person name="Evans K.L."/>
            <person name="Faulkner L."/>
            <person name="Francis F."/>
            <person name="Frankland J."/>
            <person name="Fraser A.E."/>
            <person name="Galgoczy P."/>
            <person name="Gilbert J."/>
            <person name="Gill R."/>
            <person name="Gloeckner G."/>
            <person name="Gregory S.G."/>
            <person name="Gribble S."/>
            <person name="Griffiths C."/>
            <person name="Grocock R."/>
            <person name="Gu Y."/>
            <person name="Gwilliam R."/>
            <person name="Hamilton C."/>
            <person name="Hart E.A."/>
            <person name="Hawes A."/>
            <person name="Heath P.D."/>
            <person name="Heitmann K."/>
            <person name="Hennig S."/>
            <person name="Hernandez J."/>
            <person name="Hinzmann B."/>
            <person name="Ho S."/>
            <person name="Hoffs M."/>
            <person name="Howden P.J."/>
            <person name="Huckle E.J."/>
            <person name="Hume J."/>
            <person name="Hunt P.J."/>
            <person name="Hunt A.R."/>
            <person name="Isherwood J."/>
            <person name="Jacob L."/>
            <person name="Johnson D."/>
            <person name="Jones S."/>
            <person name="de Jong P.J."/>
            <person name="Joseph S.S."/>
            <person name="Keenan S."/>
            <person name="Kelly S."/>
            <person name="Kershaw J.K."/>
            <person name="Khan Z."/>
            <person name="Kioschis P."/>
            <person name="Klages S."/>
            <person name="Knights A.J."/>
            <person name="Kosiura A."/>
            <person name="Kovar-Smith C."/>
            <person name="Laird G.K."/>
            <person name="Langford C."/>
            <person name="Lawlor S."/>
            <person name="Leversha M."/>
            <person name="Lewis L."/>
            <person name="Liu W."/>
            <person name="Lloyd C."/>
            <person name="Lloyd D.M."/>
            <person name="Loulseged H."/>
            <person name="Loveland J.E."/>
            <person name="Lovell J.D."/>
            <person name="Lozado R."/>
            <person name="Lu J."/>
            <person name="Lyne R."/>
            <person name="Ma J."/>
            <person name="Maheshwari M."/>
            <person name="Matthews L.H."/>
            <person name="McDowall J."/>
            <person name="McLaren S."/>
            <person name="McMurray A."/>
            <person name="Meidl P."/>
            <person name="Meitinger T."/>
            <person name="Milne S."/>
            <person name="Miner G."/>
            <person name="Mistry S.L."/>
            <person name="Morgan M."/>
            <person name="Morris S."/>
            <person name="Mueller I."/>
            <person name="Mullikin J.C."/>
            <person name="Nguyen N."/>
            <person name="Nordsiek G."/>
            <person name="Nyakatura G."/>
            <person name="O'dell C.N."/>
            <person name="Okwuonu G."/>
            <person name="Palmer S."/>
            <person name="Pandian R."/>
            <person name="Parker D."/>
            <person name="Parrish J."/>
            <person name="Pasternak S."/>
            <person name="Patel D."/>
            <person name="Pearce A.V."/>
            <person name="Pearson D.M."/>
            <person name="Pelan S.E."/>
            <person name="Perez L."/>
            <person name="Porter K.M."/>
            <person name="Ramsey Y."/>
            <person name="Reichwald K."/>
            <person name="Rhodes S."/>
            <person name="Ridler K.A."/>
            <person name="Schlessinger D."/>
            <person name="Schueler M.G."/>
            <person name="Sehra H.K."/>
            <person name="Shaw-Smith C."/>
            <person name="Shen H."/>
            <person name="Sheridan E.M."/>
            <person name="Shownkeen R."/>
            <person name="Skuce C.D."/>
            <person name="Smith M.L."/>
            <person name="Sotheran E.C."/>
            <person name="Steingruber H.E."/>
            <person name="Steward C.A."/>
            <person name="Storey R."/>
            <person name="Swann R.M."/>
            <person name="Swarbreck D."/>
            <person name="Tabor P.E."/>
            <person name="Taudien S."/>
            <person name="Taylor T."/>
            <person name="Teague B."/>
            <person name="Thomas K."/>
            <person name="Thorpe A."/>
            <person name="Timms K."/>
            <person name="Tracey A."/>
            <person name="Trevanion S."/>
            <person name="Tromans A.C."/>
            <person name="d'Urso M."/>
            <person name="Verduzco D."/>
            <person name="Villasana D."/>
            <person name="Waldron L."/>
            <person name="Wall M."/>
            <person name="Wang Q."/>
            <person name="Warren J."/>
            <person name="Warry G.L."/>
            <person name="Wei X."/>
            <person name="West A."/>
            <person name="Whitehead S.L."/>
            <person name="Whiteley M.N."/>
            <person name="Wilkinson J.E."/>
            <person name="Willey D.L."/>
            <person name="Williams G."/>
            <person name="Williams L."/>
            <person name="Williamson A."/>
            <person name="Williamson H."/>
            <person name="Wilming L."/>
            <person name="Woodmansey R.L."/>
            <person name="Wray P.W."/>
            <person name="Yen J."/>
            <person name="Zhang J."/>
            <person name="Zhou J."/>
            <person name="Zoghbi H."/>
            <person name="Zorilla S."/>
            <person name="Buck D."/>
            <person name="Reinhardt R."/>
            <person name="Poustka A."/>
            <person name="Rosenthal A."/>
            <person name="Lehrach H."/>
            <person name="Meindl A."/>
            <person name="Minx P.J."/>
            <person name="Hillier L.W."/>
            <person name="Willard H.F."/>
            <person name="Wilson R.K."/>
            <person name="Waterston R.H."/>
            <person name="Rice C.M."/>
            <person name="Vaudin M."/>
            <person name="Coulson A."/>
            <person name="Nelson D.L."/>
            <person name="Weinstock G."/>
            <person name="Sulston J.E."/>
            <person name="Durbin R.M."/>
            <person name="Hubbard T."/>
            <person name="Gibbs R.A."/>
            <person name="Beck S."/>
            <person name="Rogers J."/>
            <person name="Bentley D.R."/>
        </authorList>
    </citation>
    <scope>NUCLEOTIDE SEQUENCE [LARGE SCALE GENOMIC DNA]</scope>
</reference>
<reference key="6">
    <citation type="submission" date="2005-09" db="EMBL/GenBank/DDBJ databases">
        <authorList>
            <person name="Mural R.J."/>
            <person name="Istrail S."/>
            <person name="Sutton G.G."/>
            <person name="Florea L."/>
            <person name="Halpern A.L."/>
            <person name="Mobarry C.M."/>
            <person name="Lippert R."/>
            <person name="Walenz B."/>
            <person name="Shatkay H."/>
            <person name="Dew I."/>
            <person name="Miller J.R."/>
            <person name="Flanigan M.J."/>
            <person name="Edwards N.J."/>
            <person name="Bolanos R."/>
            <person name="Fasulo D."/>
            <person name="Halldorsson B.V."/>
            <person name="Hannenhalli S."/>
            <person name="Turner R."/>
            <person name="Yooseph S."/>
            <person name="Lu F."/>
            <person name="Nusskern D.R."/>
            <person name="Shue B.C."/>
            <person name="Zheng X.H."/>
            <person name="Zhong F."/>
            <person name="Delcher A.L."/>
            <person name="Huson D.H."/>
            <person name="Kravitz S.A."/>
            <person name="Mouchard L."/>
            <person name="Reinert K."/>
            <person name="Remington K.A."/>
            <person name="Clark A.G."/>
            <person name="Waterman M.S."/>
            <person name="Eichler E.E."/>
            <person name="Adams M.D."/>
            <person name="Hunkapiller M.W."/>
            <person name="Myers E.W."/>
            <person name="Venter J.C."/>
        </authorList>
    </citation>
    <scope>NUCLEOTIDE SEQUENCE [LARGE SCALE GENOMIC DNA]</scope>
</reference>
<reference key="7">
    <citation type="journal article" date="2004" name="Genome Res.">
        <title>The status, quality, and expansion of the NIH full-length cDNA project: the Mammalian Gene Collection (MGC).</title>
        <authorList>
            <consortium name="The MGC Project Team"/>
        </authorList>
    </citation>
    <scope>NUCLEOTIDE SEQUENCE [LARGE SCALE MRNA]</scope>
    <source>
        <tissue>Leukocyte</tissue>
        <tissue>Placenta</tissue>
    </source>
</reference>
<reference key="8">
    <citation type="journal article" date="2011" name="BMC Syst. Biol.">
        <title>Initial characterization of the human central proteome.</title>
        <authorList>
            <person name="Burkard T.R."/>
            <person name="Planyavsky M."/>
            <person name="Kaupe I."/>
            <person name="Breitwieser F.P."/>
            <person name="Buerckstuemmer T."/>
            <person name="Bennett K.L."/>
            <person name="Superti-Furga G."/>
            <person name="Colinge J."/>
        </authorList>
    </citation>
    <scope>IDENTIFICATION BY MASS SPECTROMETRY [LARGE SCALE ANALYSIS]</scope>
</reference>
<reference key="9">
    <citation type="journal article" date="2014" name="Hum. Mol. Genet.">
        <title>A new congenital disorder of glycosylation caused by a mutation in SSR4, the signal sequence receptor 4 protein of the TRAP complex.</title>
        <authorList>
            <consortium name="University of Washington Center for Mendelian Genomics"/>
            <person name="Losfeld M.E."/>
            <person name="Ng B.G."/>
            <person name="Kircher M."/>
            <person name="Buckingham K.J."/>
            <person name="Turner E.H."/>
            <person name="Eroshkin A."/>
            <person name="Smith J.D."/>
            <person name="Shendure J."/>
            <person name="Nickerson D.A."/>
            <person name="Bamshad M.J."/>
            <person name="Freeze H.H."/>
        </authorList>
    </citation>
    <scope>INVOLVEMENT IN CDG1Y</scope>
</reference>
<reference key="10">
    <citation type="journal article" date="2014" name="J. Proteomics">
        <title>An enzyme assisted RP-RPLC approach for in-depth analysis of human liver phosphoproteome.</title>
        <authorList>
            <person name="Bian Y."/>
            <person name="Song C."/>
            <person name="Cheng K."/>
            <person name="Dong M."/>
            <person name="Wang F."/>
            <person name="Huang J."/>
            <person name="Sun D."/>
            <person name="Wang L."/>
            <person name="Ye M."/>
            <person name="Zou H."/>
        </authorList>
    </citation>
    <scope>IDENTIFICATION BY MASS SPECTROMETRY [LARGE SCALE ANALYSIS]</scope>
    <source>
        <tissue>Liver</tissue>
    </source>
</reference>
<reference key="11">
    <citation type="journal article" date="2015" name="Proteomics">
        <title>N-terminome analysis of the human mitochondrial proteome.</title>
        <authorList>
            <person name="Vaca Jacome A.S."/>
            <person name="Rabilloud T."/>
            <person name="Schaeffer-Reiss C."/>
            <person name="Rompais M."/>
            <person name="Ayoub D."/>
            <person name="Lane L."/>
            <person name="Bairoch A."/>
            <person name="Van Dorsselaer A."/>
            <person name="Carapito C."/>
        </authorList>
    </citation>
    <scope>IDENTIFICATION BY MASS SPECTROMETRY [LARGE SCALE ANALYSIS]</scope>
</reference>
<reference evidence="7" key="12">
    <citation type="journal article" date="2023" name="Nature">
        <title>Visualization of translation and protein biogenesis at the ER membrane.</title>
        <authorList>
            <person name="Gemmer M."/>
            <person name="Chaillet M.L."/>
            <person name="van Loenhout J."/>
            <person name="Cuevas Arenas R."/>
            <person name="Vismpas D."/>
            <person name="Grollers-Mulderij M."/>
            <person name="Koh F.A."/>
            <person name="Albanese P."/>
            <person name="Scheltema R.A."/>
            <person name="Howes S.C."/>
            <person name="Kotecha A."/>
            <person name="Fedry J."/>
            <person name="Forster F."/>
        </authorList>
    </citation>
    <scope>STRUCTURE BY ELECTRON MICROSCOPY (7.60 ANGSTROMS) OF THE STT3A-CONTAINING OLIGOSACCHARYLTRANSFERASE (OST) AND TRANSLOCON COMPLEXES</scope>
    <scope>SUBUNIT</scope>
</reference>
<reference key="13">
    <citation type="journal article" date="2010" name="Am. J. Hum. Genet.">
        <title>Terminal osseous dysplasia is caused by a single recurrent mutation in the FLNA gene.</title>
        <authorList>
            <person name="Sun Y."/>
            <person name="Almomani R."/>
            <person name="Aten E."/>
            <person name="Celli J."/>
            <person name="van der Heijden J."/>
            <person name="Venselaar H."/>
            <person name="Robertson S.P."/>
            <person name="Baroncini A."/>
            <person name="Franco B."/>
            <person name="Basel-Vanagaite L."/>
            <person name="Horii E."/>
            <person name="Drut R."/>
            <person name="Ariyurek Y."/>
            <person name="den Dunnen J.T."/>
            <person name="Breuning M.H."/>
        </authorList>
    </citation>
    <scope>VARIANT ARG-144</scope>
</reference>
<gene>
    <name type="primary">SSR4</name>
    <name type="synonym">TRAPD</name>
</gene>
<name>SSRD_HUMAN</name>
<sequence length="173" mass="18999">MAAMASLGALALLLLSSLSRCSAEACLEPQITPSYYTTSDAVISTETVFIVEISLTCKNRVQNMALYADVGGKQFPVTRGQDVGRYQVSWSLDHKSAHAGTYEVRFFDEESYSLLRKAQRNNEDISIIPPLFTVSVDHRGTWNGPWVSTEVLAAAIGLVIYYLAFSAKSHIQA</sequence>
<dbReference type="EMBL" id="X90583">
    <property type="protein sequence ID" value="CAA62211.1"/>
    <property type="molecule type" value="mRNA"/>
</dbReference>
<dbReference type="EMBL" id="Z68129">
    <property type="protein sequence ID" value="CAA92215.1"/>
    <property type="molecule type" value="Genomic_DNA"/>
</dbReference>
<dbReference type="EMBL" id="Z69043">
    <property type="protein sequence ID" value="CAA93157.1"/>
    <property type="molecule type" value="mRNA"/>
</dbReference>
<dbReference type="EMBL" id="BT007192">
    <property type="protein sequence ID" value="AAP35856.1"/>
    <property type="molecule type" value="mRNA"/>
</dbReference>
<dbReference type="EMBL" id="AK290493">
    <property type="protein sequence ID" value="BAF83182.1"/>
    <property type="molecule type" value="mRNA"/>
</dbReference>
<dbReference type="EMBL" id="U52111">
    <property type="status" value="NOT_ANNOTATED_CDS"/>
    <property type="molecule type" value="Genomic_DNA"/>
</dbReference>
<dbReference type="EMBL" id="CH471172">
    <property type="protein sequence ID" value="EAW72811.1"/>
    <property type="molecule type" value="Genomic_DNA"/>
</dbReference>
<dbReference type="EMBL" id="BC003371">
    <property type="protein sequence ID" value="AAH03371.1"/>
    <property type="molecule type" value="mRNA"/>
</dbReference>
<dbReference type="EMBL" id="BC032351">
    <property type="status" value="NOT_ANNOTATED_CDS"/>
    <property type="molecule type" value="mRNA"/>
</dbReference>
<dbReference type="CCDS" id="CCDS14731.1"/>
<dbReference type="PIR" id="S59865">
    <property type="entry name" value="S59865"/>
</dbReference>
<dbReference type="RefSeq" id="NP_001191455.1">
    <property type="nucleotide sequence ID" value="NM_001204526.1"/>
</dbReference>
<dbReference type="RefSeq" id="NP_006271.1">
    <property type="nucleotide sequence ID" value="NM_006280.3"/>
</dbReference>
<dbReference type="RefSeq" id="XP_011529488.1">
    <property type="nucleotide sequence ID" value="XM_011531186.1"/>
</dbReference>
<dbReference type="RefSeq" id="XP_011529489.1">
    <property type="nucleotide sequence ID" value="XM_011531187.1"/>
</dbReference>
<dbReference type="RefSeq" id="XP_047298346.1">
    <property type="nucleotide sequence ID" value="XM_047442390.1"/>
</dbReference>
<dbReference type="RefSeq" id="XP_054183598.1">
    <property type="nucleotide sequence ID" value="XM_054327623.1"/>
</dbReference>
<dbReference type="PDB" id="8B6L">
    <property type="method" value="EM"/>
    <property type="resolution" value="7.60 A"/>
    <property type="chains" value="H=1-173"/>
</dbReference>
<dbReference type="PDBsum" id="8B6L"/>
<dbReference type="EMDB" id="EMD-15870"/>
<dbReference type="SMR" id="P51571"/>
<dbReference type="BioGRID" id="112626">
    <property type="interactions" value="229"/>
</dbReference>
<dbReference type="ComplexPortal" id="CPX-8024">
    <property type="entry name" value="Translocon-associated protein complex"/>
</dbReference>
<dbReference type="FunCoup" id="P51571">
    <property type="interactions" value="1658"/>
</dbReference>
<dbReference type="IntAct" id="P51571">
    <property type="interactions" value="113"/>
</dbReference>
<dbReference type="MINT" id="P51571"/>
<dbReference type="STRING" id="9606.ENSP00000317331"/>
<dbReference type="ChEMBL" id="CHEMBL4295777"/>
<dbReference type="GlyGen" id="P51571">
    <property type="glycosylation" value="1 site, 1 O-linked glycan (1 site)"/>
</dbReference>
<dbReference type="iPTMnet" id="P51571"/>
<dbReference type="MetOSite" id="P51571"/>
<dbReference type="PhosphoSitePlus" id="P51571"/>
<dbReference type="SwissPalm" id="P51571"/>
<dbReference type="BioMuta" id="SSR4"/>
<dbReference type="DMDM" id="1711550"/>
<dbReference type="jPOST" id="P51571"/>
<dbReference type="MassIVE" id="P51571"/>
<dbReference type="PaxDb" id="9606-ENSP00000317331"/>
<dbReference type="PeptideAtlas" id="P51571"/>
<dbReference type="ProteomicsDB" id="56334"/>
<dbReference type="Pumba" id="P51571"/>
<dbReference type="TopDownProteomics" id="P51571"/>
<dbReference type="Antibodypedia" id="30981">
    <property type="antibodies" value="163 antibodies from 25 providers"/>
</dbReference>
<dbReference type="DNASU" id="6748"/>
<dbReference type="Ensembl" id="ENST00000320857.7">
    <property type="protein sequence ID" value="ENSP00000317331.3"/>
    <property type="gene ID" value="ENSG00000180879.14"/>
</dbReference>
<dbReference type="Ensembl" id="ENST00000370086.8">
    <property type="protein sequence ID" value="ENSP00000359103.3"/>
    <property type="gene ID" value="ENSG00000180879.14"/>
</dbReference>
<dbReference type="Ensembl" id="ENST00000370087.5">
    <property type="protein sequence ID" value="ENSP00000359104.1"/>
    <property type="gene ID" value="ENSG00000180879.14"/>
</dbReference>
<dbReference type="GeneID" id="6748"/>
<dbReference type="KEGG" id="hsa:6748"/>
<dbReference type="MANE-Select" id="ENST00000370086.8">
    <property type="protein sequence ID" value="ENSP00000359103.3"/>
    <property type="RefSeq nucleotide sequence ID" value="NM_006280.3"/>
    <property type="RefSeq protein sequence ID" value="NP_006271.1"/>
</dbReference>
<dbReference type="UCSC" id="uc004fiw.4">
    <property type="organism name" value="human"/>
</dbReference>
<dbReference type="AGR" id="HGNC:11326"/>
<dbReference type="CTD" id="6748"/>
<dbReference type="DisGeNET" id="6748"/>
<dbReference type="GeneCards" id="SSR4"/>
<dbReference type="GeneReviews" id="SSR4"/>
<dbReference type="HGNC" id="HGNC:11326">
    <property type="gene designation" value="SSR4"/>
</dbReference>
<dbReference type="HPA" id="ENSG00000180879">
    <property type="expression patterns" value="Tissue enhanced (pancreas)"/>
</dbReference>
<dbReference type="MalaCards" id="SSR4"/>
<dbReference type="MIM" id="300090">
    <property type="type" value="gene"/>
</dbReference>
<dbReference type="MIM" id="300934">
    <property type="type" value="phenotype"/>
</dbReference>
<dbReference type="neXtProt" id="NX_P51571"/>
<dbReference type="OpenTargets" id="ENSG00000180879"/>
<dbReference type="Orphanet" id="370927">
    <property type="disease" value="SSR4-CDG"/>
</dbReference>
<dbReference type="PharmGKB" id="PA36150"/>
<dbReference type="VEuPathDB" id="HostDB:ENSG00000180879"/>
<dbReference type="eggNOG" id="KOG4088">
    <property type="taxonomic scope" value="Eukaryota"/>
</dbReference>
<dbReference type="GeneTree" id="ENSGT00390000008992"/>
<dbReference type="HOGENOM" id="CLU_100264_0_1_1"/>
<dbReference type="InParanoid" id="P51571"/>
<dbReference type="OMA" id="GPWVNSE"/>
<dbReference type="OrthoDB" id="10055808at2759"/>
<dbReference type="PAN-GO" id="P51571">
    <property type="GO annotations" value="1 GO annotation based on evolutionary models"/>
</dbReference>
<dbReference type="PhylomeDB" id="P51571"/>
<dbReference type="TreeFam" id="TF313158"/>
<dbReference type="PathwayCommons" id="P51571"/>
<dbReference type="Reactome" id="R-HSA-1799339">
    <property type="pathway name" value="SRP-dependent cotranslational protein targeting to membrane"/>
</dbReference>
<dbReference type="SignaLink" id="P51571"/>
<dbReference type="BioGRID-ORCS" id="6748">
    <property type="hits" value="24 hits in 773 CRISPR screens"/>
</dbReference>
<dbReference type="ChiTaRS" id="SSR4">
    <property type="organism name" value="human"/>
</dbReference>
<dbReference type="GeneWiki" id="SSR4"/>
<dbReference type="GenomeRNAi" id="6748"/>
<dbReference type="Pharos" id="P51571">
    <property type="development level" value="Tbio"/>
</dbReference>
<dbReference type="PRO" id="PR:P51571"/>
<dbReference type="Proteomes" id="UP000005640">
    <property type="component" value="Chromosome X"/>
</dbReference>
<dbReference type="RNAct" id="P51571">
    <property type="molecule type" value="protein"/>
</dbReference>
<dbReference type="Bgee" id="ENSG00000180879">
    <property type="expression patterns" value="Expressed in pituitary gland and 208 other cell types or tissues"/>
</dbReference>
<dbReference type="ExpressionAtlas" id="P51571">
    <property type="expression patterns" value="baseline and differential"/>
</dbReference>
<dbReference type="GO" id="GO:0012505">
    <property type="term" value="C:endomembrane system"/>
    <property type="evidence" value="ECO:0000318"/>
    <property type="project" value="GO_Central"/>
</dbReference>
<dbReference type="GO" id="GO:0005783">
    <property type="term" value="C:endoplasmic reticulum"/>
    <property type="evidence" value="ECO:0000314"/>
    <property type="project" value="HPA"/>
</dbReference>
<dbReference type="GO" id="GO:0070062">
    <property type="term" value="C:extracellular exosome"/>
    <property type="evidence" value="ECO:0007005"/>
    <property type="project" value="UniProtKB"/>
</dbReference>
<dbReference type="GO" id="GO:0005784">
    <property type="term" value="C:Sec61 translocon complex"/>
    <property type="evidence" value="ECO:0000303"/>
    <property type="project" value="UniProtKB"/>
</dbReference>
<dbReference type="InterPro" id="IPR008855">
    <property type="entry name" value="TRAP-delta"/>
</dbReference>
<dbReference type="PANTHER" id="PTHR12731:SF1">
    <property type="entry name" value="TRANSLOCON-ASSOCIATED PROTEIN SUBUNIT DELTA"/>
    <property type="match status" value="1"/>
</dbReference>
<dbReference type="PANTHER" id="PTHR12731">
    <property type="entry name" value="TRANSLOCON-ASSOCIATED PROTEIN, DELTA SUBUNIT"/>
    <property type="match status" value="1"/>
</dbReference>
<dbReference type="Pfam" id="PF05404">
    <property type="entry name" value="TRAP-delta"/>
    <property type="match status" value="1"/>
</dbReference>